<proteinExistence type="inferred from homology"/>
<gene>
    <name evidence="1" type="primary">msrA</name>
    <name type="ordered locus">ckrop_0108</name>
</gene>
<dbReference type="EC" id="1.8.4.11" evidence="1"/>
<dbReference type="EMBL" id="CP001620">
    <property type="protein sequence ID" value="ACR16905.1"/>
    <property type="molecule type" value="Genomic_DNA"/>
</dbReference>
<dbReference type="RefSeq" id="WP_012730793.1">
    <property type="nucleotide sequence ID" value="NC_012704.1"/>
</dbReference>
<dbReference type="SMR" id="C4LG69"/>
<dbReference type="STRING" id="645127.ckrop_0108"/>
<dbReference type="KEGG" id="ckp:ckrop_0108"/>
<dbReference type="eggNOG" id="COG0225">
    <property type="taxonomic scope" value="Bacteria"/>
</dbReference>
<dbReference type="HOGENOM" id="CLU_031040_10_3_11"/>
<dbReference type="OrthoDB" id="4174719at2"/>
<dbReference type="Proteomes" id="UP000001473">
    <property type="component" value="Chromosome"/>
</dbReference>
<dbReference type="GO" id="GO:0005737">
    <property type="term" value="C:cytoplasm"/>
    <property type="evidence" value="ECO:0007669"/>
    <property type="project" value="TreeGrafter"/>
</dbReference>
<dbReference type="GO" id="GO:0036456">
    <property type="term" value="F:L-methionine-(S)-S-oxide reductase activity"/>
    <property type="evidence" value="ECO:0007669"/>
    <property type="project" value="TreeGrafter"/>
</dbReference>
<dbReference type="GO" id="GO:0008113">
    <property type="term" value="F:peptide-methionine (S)-S-oxide reductase activity"/>
    <property type="evidence" value="ECO:0007669"/>
    <property type="project" value="UniProtKB-UniRule"/>
</dbReference>
<dbReference type="GO" id="GO:0034599">
    <property type="term" value="P:cellular response to oxidative stress"/>
    <property type="evidence" value="ECO:0007669"/>
    <property type="project" value="TreeGrafter"/>
</dbReference>
<dbReference type="GO" id="GO:0036211">
    <property type="term" value="P:protein modification process"/>
    <property type="evidence" value="ECO:0007669"/>
    <property type="project" value="UniProtKB-UniRule"/>
</dbReference>
<dbReference type="Gene3D" id="3.30.1060.10">
    <property type="entry name" value="Peptide methionine sulphoxide reductase MsrA"/>
    <property type="match status" value="1"/>
</dbReference>
<dbReference type="HAMAP" id="MF_01401">
    <property type="entry name" value="MsrA"/>
    <property type="match status" value="1"/>
</dbReference>
<dbReference type="InterPro" id="IPR002569">
    <property type="entry name" value="Met_Sox_Rdtase_MsrA_dom"/>
</dbReference>
<dbReference type="InterPro" id="IPR036509">
    <property type="entry name" value="Met_Sox_Rdtase_MsrA_sf"/>
</dbReference>
<dbReference type="InterPro" id="IPR050162">
    <property type="entry name" value="MsrA_MetSO_reductase"/>
</dbReference>
<dbReference type="NCBIfam" id="TIGR00401">
    <property type="entry name" value="msrA"/>
    <property type="match status" value="1"/>
</dbReference>
<dbReference type="PANTHER" id="PTHR42799">
    <property type="entry name" value="MITOCHONDRIAL PEPTIDE METHIONINE SULFOXIDE REDUCTASE"/>
    <property type="match status" value="1"/>
</dbReference>
<dbReference type="PANTHER" id="PTHR42799:SF2">
    <property type="entry name" value="MITOCHONDRIAL PEPTIDE METHIONINE SULFOXIDE REDUCTASE"/>
    <property type="match status" value="1"/>
</dbReference>
<dbReference type="Pfam" id="PF01625">
    <property type="entry name" value="PMSR"/>
    <property type="match status" value="1"/>
</dbReference>
<dbReference type="SUPFAM" id="SSF55068">
    <property type="entry name" value="Peptide methionine sulfoxide reductase"/>
    <property type="match status" value="1"/>
</dbReference>
<keyword id="KW-0560">Oxidoreductase</keyword>
<keyword id="KW-1185">Reference proteome</keyword>
<reference key="1">
    <citation type="journal article" date="2008" name="J. Biotechnol.">
        <title>Ultrafast pyrosequencing of Corynebacterium kroppenstedtii DSM44385 revealed insights into the physiology of a lipophilic corynebacterium that lacks mycolic acids.</title>
        <authorList>
            <person name="Tauch A."/>
            <person name="Schneider J."/>
            <person name="Szczepanowski R."/>
            <person name="Tilker A."/>
            <person name="Viehoever P."/>
            <person name="Gartemann K.-H."/>
            <person name="Arnold W."/>
            <person name="Blom J."/>
            <person name="Brinkrolf K."/>
            <person name="Brune I."/>
            <person name="Goetker S."/>
            <person name="Weisshaar B."/>
            <person name="Goesmann A."/>
            <person name="Droege M."/>
            <person name="Puehler A."/>
        </authorList>
    </citation>
    <scope>NUCLEOTIDE SEQUENCE [LARGE SCALE GENOMIC DNA]</scope>
    <source>
        <strain>DSM 44385 / JCM 11950 / CIP 105744 / CCUG 35717</strain>
    </source>
</reference>
<sequence>MGFLFGTRPTPTSIVNREDALPGRDEPILPHPAPHTVLGTPIDGPWKDGQRSVVVGLGCFWGAEKLFWQIDGVESTAVGYAGGYTPNPTYREVCTGRTGHAETVRVIYDPQEVSFEDLIRTFFEAHDPTQGFRQGNDVGTQYRSVIYAQTDDEVQKAREIAESFSHSLADAGYGGITTDISLLSDTPTKTMYLAEDEHQQYLDKNPNGYCPVHSTGVACR</sequence>
<evidence type="ECO:0000255" key="1">
    <source>
        <dbReference type="HAMAP-Rule" id="MF_01401"/>
    </source>
</evidence>
<organism>
    <name type="scientific">Corynebacterium kroppenstedtii (strain DSM 44385 / JCM 11950 / CIP 105744 / CCUG 35717)</name>
    <dbReference type="NCBI Taxonomy" id="645127"/>
    <lineage>
        <taxon>Bacteria</taxon>
        <taxon>Bacillati</taxon>
        <taxon>Actinomycetota</taxon>
        <taxon>Actinomycetes</taxon>
        <taxon>Mycobacteriales</taxon>
        <taxon>Corynebacteriaceae</taxon>
        <taxon>Corynebacterium</taxon>
    </lineage>
</organism>
<protein>
    <recommendedName>
        <fullName evidence="1">Peptide methionine sulfoxide reductase MsrA</fullName>
        <shortName evidence="1">Protein-methionine-S-oxide reductase</shortName>
        <ecNumber evidence="1">1.8.4.11</ecNumber>
    </recommendedName>
    <alternativeName>
        <fullName evidence="1">Peptide-methionine (S)-S-oxide reductase</fullName>
        <shortName evidence="1">Peptide Met(O) reductase</shortName>
    </alternativeName>
</protein>
<accession>C4LG69</accession>
<feature type="chain" id="PRO_1000215186" description="Peptide methionine sulfoxide reductase MsrA">
    <location>
        <begin position="1"/>
        <end position="220"/>
    </location>
</feature>
<feature type="active site" evidence="1">
    <location>
        <position position="59"/>
    </location>
</feature>
<name>MSRA_CORK4</name>
<comment type="function">
    <text evidence="1">Has an important function as a repair enzyme for proteins that have been inactivated by oxidation. Catalyzes the reversible oxidation-reduction of methionine sulfoxide in proteins to methionine.</text>
</comment>
<comment type="catalytic activity">
    <reaction evidence="1">
        <text>L-methionyl-[protein] + [thioredoxin]-disulfide + H2O = L-methionyl-(S)-S-oxide-[protein] + [thioredoxin]-dithiol</text>
        <dbReference type="Rhea" id="RHEA:14217"/>
        <dbReference type="Rhea" id="RHEA-COMP:10698"/>
        <dbReference type="Rhea" id="RHEA-COMP:10700"/>
        <dbReference type="Rhea" id="RHEA-COMP:12313"/>
        <dbReference type="Rhea" id="RHEA-COMP:12315"/>
        <dbReference type="ChEBI" id="CHEBI:15377"/>
        <dbReference type="ChEBI" id="CHEBI:16044"/>
        <dbReference type="ChEBI" id="CHEBI:29950"/>
        <dbReference type="ChEBI" id="CHEBI:44120"/>
        <dbReference type="ChEBI" id="CHEBI:50058"/>
        <dbReference type="EC" id="1.8.4.11"/>
    </reaction>
</comment>
<comment type="catalytic activity">
    <reaction evidence="1">
        <text>[thioredoxin]-disulfide + L-methionine + H2O = L-methionine (S)-S-oxide + [thioredoxin]-dithiol</text>
        <dbReference type="Rhea" id="RHEA:19993"/>
        <dbReference type="Rhea" id="RHEA-COMP:10698"/>
        <dbReference type="Rhea" id="RHEA-COMP:10700"/>
        <dbReference type="ChEBI" id="CHEBI:15377"/>
        <dbReference type="ChEBI" id="CHEBI:29950"/>
        <dbReference type="ChEBI" id="CHEBI:50058"/>
        <dbReference type="ChEBI" id="CHEBI:57844"/>
        <dbReference type="ChEBI" id="CHEBI:58772"/>
        <dbReference type="EC" id="1.8.4.11"/>
    </reaction>
</comment>
<comment type="similarity">
    <text evidence="1">Belongs to the MsrA Met sulfoxide reductase family.</text>
</comment>